<name>DTD_LACLA</name>
<keyword id="KW-0963">Cytoplasm</keyword>
<keyword id="KW-0378">Hydrolase</keyword>
<keyword id="KW-1185">Reference proteome</keyword>
<keyword id="KW-0694">RNA-binding</keyword>
<keyword id="KW-0820">tRNA-binding</keyword>
<organism>
    <name type="scientific">Lactococcus lactis subsp. lactis (strain IL1403)</name>
    <name type="common">Streptococcus lactis</name>
    <dbReference type="NCBI Taxonomy" id="272623"/>
    <lineage>
        <taxon>Bacteria</taxon>
        <taxon>Bacillati</taxon>
        <taxon>Bacillota</taxon>
        <taxon>Bacilli</taxon>
        <taxon>Lactobacillales</taxon>
        <taxon>Streptococcaceae</taxon>
        <taxon>Lactococcus</taxon>
    </lineage>
</organism>
<accession>Q9CJ92</accession>
<comment type="function">
    <text evidence="1">An aminoacyl-tRNA editing enzyme that deacylates mischarged D-aminoacyl-tRNAs. Also deacylates mischarged glycyl-tRNA(Ala), protecting cells against glycine mischarging by AlaRS. Acts via tRNA-based rather than protein-based catalysis; rejects L-amino acids rather than detecting D-amino acids in the active site. By recycling D-aminoacyl-tRNA to D-amino acids and free tRNA molecules, this enzyme counteracts the toxicity associated with the formation of D-aminoacyl-tRNA entities in vivo and helps enforce protein L-homochirality.</text>
</comment>
<comment type="catalytic activity">
    <reaction evidence="1">
        <text>glycyl-tRNA(Ala) + H2O = tRNA(Ala) + glycine + H(+)</text>
        <dbReference type="Rhea" id="RHEA:53744"/>
        <dbReference type="Rhea" id="RHEA-COMP:9657"/>
        <dbReference type="Rhea" id="RHEA-COMP:13640"/>
        <dbReference type="ChEBI" id="CHEBI:15377"/>
        <dbReference type="ChEBI" id="CHEBI:15378"/>
        <dbReference type="ChEBI" id="CHEBI:57305"/>
        <dbReference type="ChEBI" id="CHEBI:78442"/>
        <dbReference type="ChEBI" id="CHEBI:78522"/>
        <dbReference type="EC" id="3.1.1.96"/>
    </reaction>
</comment>
<comment type="catalytic activity">
    <reaction evidence="1">
        <text>a D-aminoacyl-tRNA + H2O = a tRNA + a D-alpha-amino acid + H(+)</text>
        <dbReference type="Rhea" id="RHEA:13953"/>
        <dbReference type="Rhea" id="RHEA-COMP:10123"/>
        <dbReference type="Rhea" id="RHEA-COMP:10124"/>
        <dbReference type="ChEBI" id="CHEBI:15377"/>
        <dbReference type="ChEBI" id="CHEBI:15378"/>
        <dbReference type="ChEBI" id="CHEBI:59871"/>
        <dbReference type="ChEBI" id="CHEBI:78442"/>
        <dbReference type="ChEBI" id="CHEBI:79333"/>
        <dbReference type="EC" id="3.1.1.96"/>
    </reaction>
</comment>
<comment type="subunit">
    <text evidence="1">Homodimer.</text>
</comment>
<comment type="subcellular location">
    <subcellularLocation>
        <location evidence="1">Cytoplasm</location>
    </subcellularLocation>
</comment>
<comment type="domain">
    <text evidence="1">A Gly-cisPro motif from one monomer fits into the active site of the other monomer to allow specific chiral rejection of L-amino acids.</text>
</comment>
<comment type="similarity">
    <text evidence="1">Belongs to the DTD family.</text>
</comment>
<gene>
    <name evidence="1" type="primary">dtd</name>
    <name type="ordered locus">LL0108</name>
    <name type="ORF">L110564</name>
</gene>
<protein>
    <recommendedName>
        <fullName evidence="1">D-aminoacyl-tRNA deacylase</fullName>
        <shortName evidence="1">DTD</shortName>
        <ecNumber evidence="1">3.1.1.96</ecNumber>
    </recommendedName>
    <alternativeName>
        <fullName evidence="1">Gly-tRNA(Ala) deacylase</fullName>
    </alternativeName>
</protein>
<proteinExistence type="inferred from homology"/>
<reference key="1">
    <citation type="journal article" date="2001" name="Genome Res.">
        <title>The complete genome sequence of the lactic acid bacterium Lactococcus lactis ssp. lactis IL1403.</title>
        <authorList>
            <person name="Bolotin A."/>
            <person name="Wincker P."/>
            <person name="Mauger S."/>
            <person name="Jaillon O."/>
            <person name="Malarme K."/>
            <person name="Weissenbach J."/>
            <person name="Ehrlich S.D."/>
            <person name="Sorokin A."/>
        </authorList>
    </citation>
    <scope>NUCLEOTIDE SEQUENCE [LARGE SCALE GENOMIC DNA]</scope>
    <source>
        <strain>IL1403</strain>
    </source>
</reference>
<feature type="chain" id="PRO_0000164550" description="D-aminoacyl-tRNA deacylase">
    <location>
        <begin position="1"/>
        <end position="151"/>
    </location>
</feature>
<feature type="short sequence motif" description="Gly-cisPro motif, important for rejection of L-amino acids" evidence="1">
    <location>
        <begin position="136"/>
        <end position="137"/>
    </location>
</feature>
<dbReference type="EC" id="3.1.1.96" evidence="1"/>
<dbReference type="EMBL" id="AE005176">
    <property type="protein sequence ID" value="AAK04206.1"/>
    <property type="molecule type" value="Genomic_DNA"/>
</dbReference>
<dbReference type="PIR" id="D86638">
    <property type="entry name" value="D86638"/>
</dbReference>
<dbReference type="RefSeq" id="NP_266264.1">
    <property type="nucleotide sequence ID" value="NC_002662.1"/>
</dbReference>
<dbReference type="RefSeq" id="WP_010905120.1">
    <property type="nucleotide sequence ID" value="NC_002662.1"/>
</dbReference>
<dbReference type="SMR" id="Q9CJ92"/>
<dbReference type="PaxDb" id="272623-L110564"/>
<dbReference type="EnsemblBacteria" id="AAK04206">
    <property type="protein sequence ID" value="AAK04206"/>
    <property type="gene ID" value="L110564"/>
</dbReference>
<dbReference type="KEGG" id="lla:L110564"/>
<dbReference type="PATRIC" id="fig|272623.7.peg.122"/>
<dbReference type="eggNOG" id="COG1490">
    <property type="taxonomic scope" value="Bacteria"/>
</dbReference>
<dbReference type="HOGENOM" id="CLU_076901_1_0_9"/>
<dbReference type="OrthoDB" id="9801395at2"/>
<dbReference type="Proteomes" id="UP000002196">
    <property type="component" value="Chromosome"/>
</dbReference>
<dbReference type="GO" id="GO:0005737">
    <property type="term" value="C:cytoplasm"/>
    <property type="evidence" value="ECO:0007669"/>
    <property type="project" value="UniProtKB-SubCell"/>
</dbReference>
<dbReference type="GO" id="GO:0051500">
    <property type="term" value="F:D-tyrosyl-tRNA(Tyr) deacylase activity"/>
    <property type="evidence" value="ECO:0007669"/>
    <property type="project" value="TreeGrafter"/>
</dbReference>
<dbReference type="GO" id="GO:0106026">
    <property type="term" value="F:Gly-tRNA(Ala) deacylase activity"/>
    <property type="evidence" value="ECO:0007669"/>
    <property type="project" value="UniProtKB-UniRule"/>
</dbReference>
<dbReference type="GO" id="GO:0043908">
    <property type="term" value="F:Ser(Gly)-tRNA(Ala) hydrolase activity"/>
    <property type="evidence" value="ECO:0007669"/>
    <property type="project" value="UniProtKB-UniRule"/>
</dbReference>
<dbReference type="GO" id="GO:0000049">
    <property type="term" value="F:tRNA binding"/>
    <property type="evidence" value="ECO:0007669"/>
    <property type="project" value="UniProtKB-UniRule"/>
</dbReference>
<dbReference type="GO" id="GO:0019478">
    <property type="term" value="P:D-amino acid catabolic process"/>
    <property type="evidence" value="ECO:0007669"/>
    <property type="project" value="UniProtKB-UniRule"/>
</dbReference>
<dbReference type="CDD" id="cd00563">
    <property type="entry name" value="Dtyr_deacylase"/>
    <property type="match status" value="1"/>
</dbReference>
<dbReference type="FunFam" id="3.50.80.10:FF:000001">
    <property type="entry name" value="D-aminoacyl-tRNA deacylase"/>
    <property type="match status" value="1"/>
</dbReference>
<dbReference type="Gene3D" id="3.50.80.10">
    <property type="entry name" value="D-tyrosyl-tRNA(Tyr) deacylase"/>
    <property type="match status" value="1"/>
</dbReference>
<dbReference type="HAMAP" id="MF_00518">
    <property type="entry name" value="Deacylase_Dtd"/>
    <property type="match status" value="1"/>
</dbReference>
<dbReference type="InterPro" id="IPR003732">
    <property type="entry name" value="Daa-tRNA_deacyls_DTD"/>
</dbReference>
<dbReference type="InterPro" id="IPR023509">
    <property type="entry name" value="DTD-like_sf"/>
</dbReference>
<dbReference type="NCBIfam" id="TIGR00256">
    <property type="entry name" value="D-aminoacyl-tRNA deacylase"/>
    <property type="match status" value="1"/>
</dbReference>
<dbReference type="PANTHER" id="PTHR10472:SF5">
    <property type="entry name" value="D-AMINOACYL-TRNA DEACYLASE 1"/>
    <property type="match status" value="1"/>
</dbReference>
<dbReference type="PANTHER" id="PTHR10472">
    <property type="entry name" value="D-TYROSYL-TRNA TYR DEACYLASE"/>
    <property type="match status" value="1"/>
</dbReference>
<dbReference type="Pfam" id="PF02580">
    <property type="entry name" value="Tyr_Deacylase"/>
    <property type="match status" value="1"/>
</dbReference>
<dbReference type="SUPFAM" id="SSF69500">
    <property type="entry name" value="DTD-like"/>
    <property type="match status" value="1"/>
</dbReference>
<evidence type="ECO:0000255" key="1">
    <source>
        <dbReference type="HAMAP-Rule" id="MF_00518"/>
    </source>
</evidence>
<sequence length="151" mass="16532">MKIVIQRVKSASVSIDGVIKGKINQGFLLLVGVEDADSNFDLDYAVRKIAQMRIFSDEADKMNLSVQDIQGEILSISQFTLYAETKKGNRPSFSAAGKPDFAKAMYEKFNDSLAQIVPVKAGVFGADMQVELINDGPVTIILDTKEARKNA</sequence>